<dbReference type="EC" id="3.4.21.105" evidence="1"/>
<dbReference type="EMBL" id="CP000247">
    <property type="protein sequence ID" value="ABG71485.1"/>
    <property type="molecule type" value="Genomic_DNA"/>
</dbReference>
<dbReference type="RefSeq" id="WP_000928723.1">
    <property type="nucleotide sequence ID" value="NC_008253.1"/>
</dbReference>
<dbReference type="SMR" id="Q0TC44"/>
<dbReference type="MEROPS" id="S54.016"/>
<dbReference type="GeneID" id="86862178"/>
<dbReference type="KEGG" id="ecp:ECP_3509"/>
<dbReference type="HOGENOM" id="CLU_058989_0_0_6"/>
<dbReference type="Proteomes" id="UP000009182">
    <property type="component" value="Chromosome"/>
</dbReference>
<dbReference type="GO" id="GO:0005886">
    <property type="term" value="C:plasma membrane"/>
    <property type="evidence" value="ECO:0007669"/>
    <property type="project" value="UniProtKB-SubCell"/>
</dbReference>
<dbReference type="GO" id="GO:0004252">
    <property type="term" value="F:serine-type endopeptidase activity"/>
    <property type="evidence" value="ECO:0007669"/>
    <property type="project" value="UniProtKB-UniRule"/>
</dbReference>
<dbReference type="GO" id="GO:0006508">
    <property type="term" value="P:proteolysis"/>
    <property type="evidence" value="ECO:0007669"/>
    <property type="project" value="UniProtKB-UniRule"/>
</dbReference>
<dbReference type="FunFam" id="1.20.1540.10:FF:000003">
    <property type="entry name" value="Rhomboid protease GlpG"/>
    <property type="match status" value="1"/>
</dbReference>
<dbReference type="FunFam" id="3.30.70.2350:FF:000001">
    <property type="entry name" value="Rhomboid protease GlpG"/>
    <property type="match status" value="1"/>
</dbReference>
<dbReference type="Gene3D" id="3.30.70.2350">
    <property type="match status" value="1"/>
</dbReference>
<dbReference type="Gene3D" id="1.20.1540.10">
    <property type="entry name" value="Rhomboid-like"/>
    <property type="match status" value="1"/>
</dbReference>
<dbReference type="HAMAP" id="MF_01594">
    <property type="entry name" value="Rhomboid_GlpG"/>
    <property type="match status" value="1"/>
</dbReference>
<dbReference type="InterPro" id="IPR038236">
    <property type="entry name" value="GlpG_N_sf"/>
</dbReference>
<dbReference type="InterPro" id="IPR022732">
    <property type="entry name" value="Peptidase_S54_GlpG_N"/>
</dbReference>
<dbReference type="InterPro" id="IPR022764">
    <property type="entry name" value="Peptidase_S54_rhomboid_dom"/>
</dbReference>
<dbReference type="InterPro" id="IPR035952">
    <property type="entry name" value="Rhomboid-like_sf"/>
</dbReference>
<dbReference type="InterPro" id="IPR023662">
    <property type="entry name" value="Rhomboid_protease_GlpG"/>
</dbReference>
<dbReference type="NCBIfam" id="NF008155">
    <property type="entry name" value="PRK10907.1"/>
    <property type="match status" value="1"/>
</dbReference>
<dbReference type="NCBIfam" id="TIGR04239">
    <property type="entry name" value="rhombo_GlpG"/>
    <property type="match status" value="1"/>
</dbReference>
<dbReference type="PANTHER" id="PTHR43066:SF26">
    <property type="entry name" value="RHOMBOID PROTEASE GLPG"/>
    <property type="match status" value="1"/>
</dbReference>
<dbReference type="PANTHER" id="PTHR43066">
    <property type="entry name" value="RHOMBOID-RELATED PROTEIN"/>
    <property type="match status" value="1"/>
</dbReference>
<dbReference type="Pfam" id="PF01694">
    <property type="entry name" value="Rhomboid"/>
    <property type="match status" value="1"/>
</dbReference>
<dbReference type="Pfam" id="PF12122">
    <property type="entry name" value="Rhomboid_N"/>
    <property type="match status" value="1"/>
</dbReference>
<dbReference type="SUPFAM" id="SSF144091">
    <property type="entry name" value="Rhomboid-like"/>
    <property type="match status" value="1"/>
</dbReference>
<evidence type="ECO:0000255" key="1">
    <source>
        <dbReference type="HAMAP-Rule" id="MF_01594"/>
    </source>
</evidence>
<comment type="function">
    <text evidence="1">Rhomboid-type serine protease that catalyzes intramembrane proteolysis.</text>
</comment>
<comment type="catalytic activity">
    <reaction evidence="1">
        <text>Cleaves type-1 transmembrane domains using a catalytic dyad composed of serine and histidine that are contributed by different transmembrane domains.</text>
        <dbReference type="EC" id="3.4.21.105"/>
    </reaction>
</comment>
<comment type="subcellular location">
    <subcellularLocation>
        <location evidence="1">Cell inner membrane</location>
        <topology evidence="1">Multi-pass membrane protein</topology>
    </subcellularLocation>
</comment>
<comment type="similarity">
    <text evidence="1">Belongs to the peptidase S54 family.</text>
</comment>
<name>GLPG_ECOL5</name>
<protein>
    <recommendedName>
        <fullName evidence="1">Rhomboid protease GlpG</fullName>
        <ecNumber evidence="1">3.4.21.105</ecNumber>
    </recommendedName>
    <alternativeName>
        <fullName evidence="1">Intramembrane serine protease</fullName>
    </alternativeName>
</protein>
<sequence>MLMITSFANPRVAQAFVDYMATQGVILTIQQHNQSDVWLADESQAERVRAELARFLENPADPRYLAASWQAGHTGSGLHYRRYPFFAALRERAGPVTWVMMIACVVVFIAMQILGDQEVMLWLAWPFDPTLKFEFWRYFTHALMHFSLMHILFNLLWWWYLGGAVEKRLGSGKLIVITLISALLSGYVQQKFSGPWFGGLSGVVYALMGYVWLRGERDPQSGIYLQRGLIIFALIWIVAGWFDLFGMSMANGAHIAGLAVGLAMAFVDSLNARKRK</sequence>
<organism>
    <name type="scientific">Escherichia coli O6:K15:H31 (strain 536 / UPEC)</name>
    <dbReference type="NCBI Taxonomy" id="362663"/>
    <lineage>
        <taxon>Bacteria</taxon>
        <taxon>Pseudomonadati</taxon>
        <taxon>Pseudomonadota</taxon>
        <taxon>Gammaproteobacteria</taxon>
        <taxon>Enterobacterales</taxon>
        <taxon>Enterobacteriaceae</taxon>
        <taxon>Escherichia</taxon>
    </lineage>
</organism>
<keyword id="KW-0997">Cell inner membrane</keyword>
<keyword id="KW-1003">Cell membrane</keyword>
<keyword id="KW-0378">Hydrolase</keyword>
<keyword id="KW-0472">Membrane</keyword>
<keyword id="KW-0645">Protease</keyword>
<keyword id="KW-0720">Serine protease</keyword>
<keyword id="KW-0812">Transmembrane</keyword>
<keyword id="KW-1133">Transmembrane helix</keyword>
<gene>
    <name evidence="1" type="primary">glpG</name>
    <name type="ordered locus">ECP_3509</name>
</gene>
<accession>Q0TC44</accession>
<feature type="chain" id="PRO_0000321684" description="Rhomboid protease GlpG">
    <location>
        <begin position="1"/>
        <end position="276"/>
    </location>
</feature>
<feature type="transmembrane region" description="Helical" evidence="1">
    <location>
        <begin position="94"/>
        <end position="114"/>
    </location>
</feature>
<feature type="transmembrane region" description="Helical" evidence="1">
    <location>
        <begin position="142"/>
        <end position="162"/>
    </location>
</feature>
<feature type="transmembrane region" description="Helical" evidence="1">
    <location>
        <begin position="169"/>
        <end position="189"/>
    </location>
</feature>
<feature type="transmembrane region" description="Helical" evidence="1">
    <location>
        <begin position="192"/>
        <end position="212"/>
    </location>
</feature>
<feature type="transmembrane region" description="Helical" evidence="1">
    <location>
        <begin position="229"/>
        <end position="249"/>
    </location>
</feature>
<feature type="transmembrane region" description="Helical" evidence="1">
    <location>
        <begin position="250"/>
        <end position="270"/>
    </location>
</feature>
<feature type="active site" description="Nucleophile" evidence="1">
    <location>
        <position position="201"/>
    </location>
</feature>
<feature type="active site" evidence="1">
    <location>
        <position position="254"/>
    </location>
</feature>
<reference key="1">
    <citation type="journal article" date="2006" name="Mol. Microbiol.">
        <title>Role of pathogenicity island-associated integrases in the genome plasticity of uropathogenic Escherichia coli strain 536.</title>
        <authorList>
            <person name="Hochhut B."/>
            <person name="Wilde C."/>
            <person name="Balling G."/>
            <person name="Middendorf B."/>
            <person name="Dobrindt U."/>
            <person name="Brzuszkiewicz E."/>
            <person name="Gottschalk G."/>
            <person name="Carniel E."/>
            <person name="Hacker J."/>
        </authorList>
    </citation>
    <scope>NUCLEOTIDE SEQUENCE [LARGE SCALE GENOMIC DNA]</scope>
    <source>
        <strain>536 / UPEC</strain>
    </source>
</reference>
<proteinExistence type="inferred from homology"/>